<evidence type="ECO:0000255" key="1">
    <source>
        <dbReference type="PROSITE-ProRule" id="PRU00027"/>
    </source>
</evidence>
<evidence type="ECO:0000256" key="2">
    <source>
        <dbReference type="SAM" id="MobiDB-lite"/>
    </source>
</evidence>
<evidence type="ECO:0000269" key="3">
    <source>
    </source>
</evidence>
<evidence type="ECO:0000269" key="4">
    <source>
    </source>
</evidence>
<evidence type="ECO:0000305" key="5"/>
<keyword id="KW-0238">DNA-binding</keyword>
<keyword id="KW-0479">Metal-binding</keyword>
<keyword id="KW-0539">Nucleus</keyword>
<keyword id="KW-1185">Reference proteome</keyword>
<keyword id="KW-0804">Transcription</keyword>
<keyword id="KW-0805">Transcription regulation</keyword>
<keyword id="KW-0862">Zinc</keyword>
<keyword id="KW-0863">Zinc-finger</keyword>
<organism>
    <name type="scientific">Arabidopsis thaliana</name>
    <name type="common">Mouse-ear cress</name>
    <dbReference type="NCBI Taxonomy" id="3702"/>
    <lineage>
        <taxon>Eukaryota</taxon>
        <taxon>Viridiplantae</taxon>
        <taxon>Streptophyta</taxon>
        <taxon>Embryophyta</taxon>
        <taxon>Tracheophyta</taxon>
        <taxon>Spermatophyta</taxon>
        <taxon>Magnoliopsida</taxon>
        <taxon>eudicotyledons</taxon>
        <taxon>Gunneridae</taxon>
        <taxon>Pentapetalae</taxon>
        <taxon>rosids</taxon>
        <taxon>malvids</taxon>
        <taxon>Brassicales</taxon>
        <taxon>Brassicaceae</taxon>
        <taxon>Camelineae</taxon>
        <taxon>Arabidopsis</taxon>
    </lineage>
</organism>
<accession>Q9M2N5</accession>
<accession>Q5IH79</accession>
<gene>
    <name type="primary">HAT</name>
    <name type="ordered locus">At3g42170</name>
    <name type="ORF">T27B3.40</name>
</gene>
<comment type="function">
    <text evidence="3 4">Transposase-like protein that is essential for plant growth and development. Binds the promoter region of the DNA helicase KU70 and genes involved in chromatin remodeling. May regulate global gene expression by recruiting other cellular factors.</text>
</comment>
<comment type="subunit">
    <text evidence="4">Homodimer.</text>
</comment>
<comment type="subcellular location">
    <subcellularLocation>
        <location evidence="4">Nucleus</location>
    </subcellularLocation>
</comment>
<comment type="disruption phenotype">
    <text evidence="3 4">Very slow growth and absence of expansion of cotyledons or development of normal leaves or floral organs. Short root with an excess of abnormal root hairs. Extremely rare production of some photosynthetic tissue.</text>
</comment>
<feature type="chain" id="PRO_0000429561" description="Zinc finger BED domain-containing protein DAYSLEEPER">
    <location>
        <begin position="1"/>
        <end position="696"/>
    </location>
</feature>
<feature type="zinc finger region" description="BED-type" evidence="1">
    <location>
        <begin position="65"/>
        <end position="132"/>
    </location>
</feature>
<feature type="region of interest" description="Disordered" evidence="2">
    <location>
        <begin position="129"/>
        <end position="148"/>
    </location>
</feature>
<feature type="region of interest" description="HATC (Hobo-Ac-Tam3) domain">
    <location>
        <begin position="592"/>
        <end position="674"/>
    </location>
</feature>
<feature type="compositionally biased region" description="Polar residues" evidence="2">
    <location>
        <begin position="129"/>
        <end position="141"/>
    </location>
</feature>
<feature type="binding site" evidence="1">
    <location>
        <position position="88"/>
    </location>
    <ligand>
        <name>Zn(2+)</name>
        <dbReference type="ChEBI" id="CHEBI:29105"/>
    </ligand>
</feature>
<feature type="binding site" evidence="1">
    <location>
        <position position="91"/>
    </location>
    <ligand>
        <name>Zn(2+)</name>
        <dbReference type="ChEBI" id="CHEBI:29105"/>
    </ligand>
</feature>
<feature type="binding site" evidence="1">
    <location>
        <position position="112"/>
    </location>
    <ligand>
        <name>Zn(2+)</name>
        <dbReference type="ChEBI" id="CHEBI:29105"/>
    </ligand>
</feature>
<feature type="binding site" evidence="1">
    <location>
        <position position="125"/>
    </location>
    <ligand>
        <name>Zn(2+)</name>
        <dbReference type="ChEBI" id="CHEBI:29105"/>
    </ligand>
</feature>
<feature type="mutagenesis site" description="Loss of DNA-binding capacity." evidence="3">
    <original>V</original>
    <variation>A</variation>
    <location>
        <position position="70"/>
    </location>
</feature>
<feature type="mutagenesis site" description="Loss of DNA-binding capacity." evidence="3">
    <original>H</original>
    <variation>A</variation>
    <location>
        <position position="73"/>
    </location>
</feature>
<feature type="mutagenesis site" description="Loss of DNA-binding capacity." evidence="3">
    <original>C</original>
    <variation>A</variation>
    <location>
        <position position="88"/>
    </location>
</feature>
<feature type="mutagenesis site" description="Loss of DNA-binding capacity." evidence="3">
    <original>C</original>
    <variation>A</variation>
    <location>
        <position position="91"/>
    </location>
</feature>
<feature type="mutagenesis site" description="Loss of DNA-binding capacity." evidence="3">
    <original>L</original>
    <variation>A</variation>
    <location>
        <position position="109"/>
    </location>
</feature>
<feature type="mutagenesis site" description="Loss of DNA-binding capacity." evidence="3">
    <original>H</original>
    <variation>A</variation>
    <location>
        <position position="112"/>
    </location>
</feature>
<feature type="mutagenesis site" description="Loss of DNA-binding capacity." evidence="3">
    <original>C</original>
    <variation>A</variation>
    <location>
        <position position="118"/>
    </location>
</feature>
<feature type="sequence conflict" description="In Ref. 1; AAW28145." evidence="5" ref="1">
    <original>A</original>
    <variation>G</variation>
    <location>
        <position position="338"/>
    </location>
</feature>
<dbReference type="EMBL" id="AY728267">
    <property type="protein sequence ID" value="AAW28145.1"/>
    <property type="molecule type" value="mRNA"/>
</dbReference>
<dbReference type="EMBL" id="AL137079">
    <property type="protein sequence ID" value="CAB68118.1"/>
    <property type="molecule type" value="Genomic_DNA"/>
</dbReference>
<dbReference type="EMBL" id="CP002686">
    <property type="protein sequence ID" value="AEE77728.1"/>
    <property type="molecule type" value="Genomic_DNA"/>
</dbReference>
<dbReference type="EMBL" id="BT003157">
    <property type="protein sequence ID" value="AAO24589.1"/>
    <property type="molecule type" value="mRNA"/>
</dbReference>
<dbReference type="EMBL" id="AK227645">
    <property type="protein sequence ID" value="BAE99632.1"/>
    <property type="molecule type" value="mRNA"/>
</dbReference>
<dbReference type="PIR" id="T46111">
    <property type="entry name" value="T46111"/>
</dbReference>
<dbReference type="SMR" id="Q9M2N5"/>
<dbReference type="BioGRID" id="529778">
    <property type="interactions" value="7"/>
</dbReference>
<dbReference type="FunCoup" id="Q9M2N5">
    <property type="interactions" value="1483"/>
</dbReference>
<dbReference type="STRING" id="3702.Q9M2N5"/>
<dbReference type="iPTMnet" id="Q9M2N5"/>
<dbReference type="PaxDb" id="3702-AT3G42170.1"/>
<dbReference type="ProteomicsDB" id="224294"/>
<dbReference type="EnsemblPlants" id="AT3G42170.1">
    <property type="protein sequence ID" value="AT3G42170.1"/>
    <property type="gene ID" value="AT3G42170"/>
</dbReference>
<dbReference type="Gramene" id="AT3G42170.1">
    <property type="protein sequence ID" value="AT3G42170.1"/>
    <property type="gene ID" value="AT3G42170"/>
</dbReference>
<dbReference type="KEGG" id="ath:AT3G42170"/>
<dbReference type="Araport" id="AT3G42170"/>
<dbReference type="TAIR" id="AT3G42170">
    <property type="gene designation" value="DAYSLEEPER"/>
</dbReference>
<dbReference type="eggNOG" id="KOG1121">
    <property type="taxonomic scope" value="Eukaryota"/>
</dbReference>
<dbReference type="HOGENOM" id="CLU_009123_1_2_1"/>
<dbReference type="InParanoid" id="Q9M2N5"/>
<dbReference type="OrthoDB" id="2610923at2759"/>
<dbReference type="PhylomeDB" id="Q9M2N5"/>
<dbReference type="CD-CODE" id="4299E36E">
    <property type="entry name" value="Nucleolus"/>
</dbReference>
<dbReference type="PRO" id="PR:Q9M2N5"/>
<dbReference type="Proteomes" id="UP000006548">
    <property type="component" value="Chromosome 3"/>
</dbReference>
<dbReference type="ExpressionAtlas" id="Q9M2N5">
    <property type="expression patterns" value="baseline and differential"/>
</dbReference>
<dbReference type="GO" id="GO:0005829">
    <property type="term" value="C:cytosol"/>
    <property type="evidence" value="ECO:0007005"/>
    <property type="project" value="TAIR"/>
</dbReference>
<dbReference type="GO" id="GO:0005634">
    <property type="term" value="C:nucleus"/>
    <property type="evidence" value="ECO:0007669"/>
    <property type="project" value="UniProtKB-SubCell"/>
</dbReference>
<dbReference type="GO" id="GO:0003677">
    <property type="term" value="F:DNA binding"/>
    <property type="evidence" value="ECO:0000353"/>
    <property type="project" value="TAIR"/>
</dbReference>
<dbReference type="GO" id="GO:0046983">
    <property type="term" value="F:protein dimerization activity"/>
    <property type="evidence" value="ECO:0007669"/>
    <property type="project" value="InterPro"/>
</dbReference>
<dbReference type="GO" id="GO:0008270">
    <property type="term" value="F:zinc ion binding"/>
    <property type="evidence" value="ECO:0007669"/>
    <property type="project" value="UniProtKB-KW"/>
</dbReference>
<dbReference type="GO" id="GO:0009791">
    <property type="term" value="P:post-embryonic development"/>
    <property type="evidence" value="ECO:0000315"/>
    <property type="project" value="TAIR"/>
</dbReference>
<dbReference type="InterPro" id="IPR025525">
    <property type="entry name" value="hAT-like_transposase_RNase-H"/>
</dbReference>
<dbReference type="InterPro" id="IPR008906">
    <property type="entry name" value="HATC_C_dom"/>
</dbReference>
<dbReference type="InterPro" id="IPR012337">
    <property type="entry name" value="RNaseH-like_sf"/>
</dbReference>
<dbReference type="InterPro" id="IPR003656">
    <property type="entry name" value="Znf_BED"/>
</dbReference>
<dbReference type="InterPro" id="IPR052035">
    <property type="entry name" value="ZnF_BED_domain_contain"/>
</dbReference>
<dbReference type="InterPro" id="IPR036236">
    <property type="entry name" value="Znf_C2H2_sf"/>
</dbReference>
<dbReference type="PANTHER" id="PTHR46481:SF10">
    <property type="entry name" value="ZINC FINGER BED DOMAIN-CONTAINING PROTEIN 39"/>
    <property type="match status" value="1"/>
</dbReference>
<dbReference type="PANTHER" id="PTHR46481">
    <property type="entry name" value="ZINC FINGER BED DOMAIN-CONTAINING PROTEIN 4"/>
    <property type="match status" value="1"/>
</dbReference>
<dbReference type="Pfam" id="PF05699">
    <property type="entry name" value="Dimer_Tnp_hAT"/>
    <property type="match status" value="1"/>
</dbReference>
<dbReference type="Pfam" id="PF14372">
    <property type="entry name" value="hAT-like_RNase-H"/>
    <property type="match status" value="1"/>
</dbReference>
<dbReference type="SMART" id="SM00614">
    <property type="entry name" value="ZnF_BED"/>
    <property type="match status" value="1"/>
</dbReference>
<dbReference type="SUPFAM" id="SSF57667">
    <property type="entry name" value="beta-beta-alpha zinc fingers"/>
    <property type="match status" value="1"/>
</dbReference>
<dbReference type="SUPFAM" id="SSF53098">
    <property type="entry name" value="Ribonuclease H-like"/>
    <property type="match status" value="1"/>
</dbReference>
<dbReference type="PROSITE" id="PS50808">
    <property type="entry name" value="ZF_BED"/>
    <property type="match status" value="1"/>
</dbReference>
<protein>
    <recommendedName>
        <fullName>Zinc finger BED domain-containing protein DAYSLEEPER</fullName>
    </recommendedName>
    <alternativeName>
        <fullName>Transposase-like protein DAYSLEEPER</fullName>
    </alternativeName>
</protein>
<proteinExistence type="evidence at protein level"/>
<sequence length="696" mass="78814">MEVYNDDTEMRSPETQPIKETALEVYNDTAEIRSPETQPIEETALEVYNDTEMVSPETQPIKRRKKKSMVWEHFTIEAVEPNCRRAFCKGCNQSFAYSNGNKVAGTSHLKRHIFKGTCPALIHTHDNDNNPLMSTPYTPKTDTPRRRYRSQNNASPYVAFNQDKCRQEIAKMIIMHDYPLHMVQHPGFVSFVQSIQPHFDAVSFNNVQGDCVATYLAEKQNVMKSLEGIPGRFCLTLDFWTSKLTLGYVFITAHYIDSDWKIQKKLLNVLMESYPEADEALSLAVANCVSEWGLEGKLFNVTFNHPASNSAVENIRPQLCIKNPGILDGQLVIGNCVARTFGSLAKDVLEKGKDVIKNIRDSVKHVKTSESHEERFTELKEQLQVPSEKVLSLDDQTQWNTTYMMLVAASELKEVFSCLDTADPDYKKPPSAEDWRHVEALCTFLKPLFEAVSTLQSTGNPSAVTFFHEVWKTQSDLSRAIAGEDPFVTGIAKTMQEKVDKYWRDCSLVLAMAVVMDPRFKMKLVEFSFSKIFGEDAGKNIKTVDDGIHELFTEYMALPSPQNTTSEGGKADGLSDFDTYIMETTGQNLKSELDQYLDETLLPRVQEFDVLDWWKQNKLKYPTLSKMARDILSIPVSAAAFDYVFDMEPREMDEYKTSLRPETVEALICAREWLLESNASSSAAAQNASATIKSEA</sequence>
<reference key="1">
    <citation type="journal article" date="2005" name="Nature">
        <title>An Arabidopsis hAT-like transposase is essential for plant development.</title>
        <authorList>
            <person name="Bundock P."/>
            <person name="Hooykaas P."/>
        </authorList>
    </citation>
    <scope>NUCLEOTIDE SEQUENCE [MRNA]</scope>
    <scope>FUNCTION</scope>
    <scope>DISRUPTION PHENOTYPE</scope>
    <scope>MUTAGENESIS OF VAL-70; HIS-73; CYS-88; CYS-91; LEU-109; HIS-112 AND CYS-118</scope>
    <source>
        <strain>cv. Columbia</strain>
    </source>
</reference>
<reference key="2">
    <citation type="journal article" date="2000" name="Nature">
        <title>Sequence and analysis of chromosome 3 of the plant Arabidopsis thaliana.</title>
        <authorList>
            <person name="Salanoubat M."/>
            <person name="Lemcke K."/>
            <person name="Rieger M."/>
            <person name="Ansorge W."/>
            <person name="Unseld M."/>
            <person name="Fartmann B."/>
            <person name="Valle G."/>
            <person name="Bloecker H."/>
            <person name="Perez-Alonso M."/>
            <person name="Obermaier B."/>
            <person name="Delseny M."/>
            <person name="Boutry M."/>
            <person name="Grivell L.A."/>
            <person name="Mache R."/>
            <person name="Puigdomenech P."/>
            <person name="De Simone V."/>
            <person name="Choisne N."/>
            <person name="Artiguenave F."/>
            <person name="Robert C."/>
            <person name="Brottier P."/>
            <person name="Wincker P."/>
            <person name="Cattolico L."/>
            <person name="Weissenbach J."/>
            <person name="Saurin W."/>
            <person name="Quetier F."/>
            <person name="Schaefer M."/>
            <person name="Mueller-Auer S."/>
            <person name="Gabel C."/>
            <person name="Fuchs M."/>
            <person name="Benes V."/>
            <person name="Wurmbach E."/>
            <person name="Drzonek H."/>
            <person name="Erfle H."/>
            <person name="Jordan N."/>
            <person name="Bangert S."/>
            <person name="Wiedelmann R."/>
            <person name="Kranz H."/>
            <person name="Voss H."/>
            <person name="Holland R."/>
            <person name="Brandt P."/>
            <person name="Nyakatura G."/>
            <person name="Vezzi A."/>
            <person name="D'Angelo M."/>
            <person name="Pallavicini A."/>
            <person name="Toppo S."/>
            <person name="Simionati B."/>
            <person name="Conrad A."/>
            <person name="Hornischer K."/>
            <person name="Kauer G."/>
            <person name="Loehnert T.-H."/>
            <person name="Nordsiek G."/>
            <person name="Reichelt J."/>
            <person name="Scharfe M."/>
            <person name="Schoen O."/>
            <person name="Bargues M."/>
            <person name="Terol J."/>
            <person name="Climent J."/>
            <person name="Navarro P."/>
            <person name="Collado C."/>
            <person name="Perez-Perez A."/>
            <person name="Ottenwaelder B."/>
            <person name="Duchemin D."/>
            <person name="Cooke R."/>
            <person name="Laudie M."/>
            <person name="Berger-Llauro C."/>
            <person name="Purnelle B."/>
            <person name="Masuy D."/>
            <person name="de Haan M."/>
            <person name="Maarse A.C."/>
            <person name="Alcaraz J.-P."/>
            <person name="Cottet A."/>
            <person name="Casacuberta E."/>
            <person name="Monfort A."/>
            <person name="Argiriou A."/>
            <person name="Flores M."/>
            <person name="Liguori R."/>
            <person name="Vitale D."/>
            <person name="Mannhaupt G."/>
            <person name="Haase D."/>
            <person name="Schoof H."/>
            <person name="Rudd S."/>
            <person name="Zaccaria P."/>
            <person name="Mewes H.-W."/>
            <person name="Mayer K.F.X."/>
            <person name="Kaul S."/>
            <person name="Town C.D."/>
            <person name="Koo H.L."/>
            <person name="Tallon L.J."/>
            <person name="Jenkins J."/>
            <person name="Rooney T."/>
            <person name="Rizzo M."/>
            <person name="Walts A."/>
            <person name="Utterback T."/>
            <person name="Fujii C.Y."/>
            <person name="Shea T.P."/>
            <person name="Creasy T.H."/>
            <person name="Haas B."/>
            <person name="Maiti R."/>
            <person name="Wu D."/>
            <person name="Peterson J."/>
            <person name="Van Aken S."/>
            <person name="Pai G."/>
            <person name="Militscher J."/>
            <person name="Sellers P."/>
            <person name="Gill J.E."/>
            <person name="Feldblyum T.V."/>
            <person name="Preuss D."/>
            <person name="Lin X."/>
            <person name="Nierman W.C."/>
            <person name="Salzberg S.L."/>
            <person name="White O."/>
            <person name="Venter J.C."/>
            <person name="Fraser C.M."/>
            <person name="Kaneko T."/>
            <person name="Nakamura Y."/>
            <person name="Sato S."/>
            <person name="Kato T."/>
            <person name="Asamizu E."/>
            <person name="Sasamoto S."/>
            <person name="Kimura T."/>
            <person name="Idesawa K."/>
            <person name="Kawashima K."/>
            <person name="Kishida Y."/>
            <person name="Kiyokawa C."/>
            <person name="Kohara M."/>
            <person name="Matsumoto M."/>
            <person name="Matsuno A."/>
            <person name="Muraki A."/>
            <person name="Nakayama S."/>
            <person name="Nakazaki N."/>
            <person name="Shinpo S."/>
            <person name="Takeuchi C."/>
            <person name="Wada T."/>
            <person name="Watanabe A."/>
            <person name="Yamada M."/>
            <person name="Yasuda M."/>
            <person name="Tabata S."/>
        </authorList>
    </citation>
    <scope>NUCLEOTIDE SEQUENCE [LARGE SCALE GENOMIC DNA]</scope>
    <source>
        <strain>cv. Columbia</strain>
    </source>
</reference>
<reference key="3">
    <citation type="journal article" date="2017" name="Plant J.">
        <title>Araport11: a complete reannotation of the Arabidopsis thaliana reference genome.</title>
        <authorList>
            <person name="Cheng C.Y."/>
            <person name="Krishnakumar V."/>
            <person name="Chan A.P."/>
            <person name="Thibaud-Nissen F."/>
            <person name="Schobel S."/>
            <person name="Town C.D."/>
        </authorList>
    </citation>
    <scope>GENOME REANNOTATION</scope>
    <source>
        <strain>cv. Columbia</strain>
    </source>
</reference>
<reference key="4">
    <citation type="journal article" date="2003" name="Science">
        <title>Empirical analysis of transcriptional activity in the Arabidopsis genome.</title>
        <authorList>
            <person name="Yamada K."/>
            <person name="Lim J."/>
            <person name="Dale J.M."/>
            <person name="Chen H."/>
            <person name="Shinn P."/>
            <person name="Palm C.J."/>
            <person name="Southwick A.M."/>
            <person name="Wu H.C."/>
            <person name="Kim C.J."/>
            <person name="Nguyen M."/>
            <person name="Pham P.K."/>
            <person name="Cheuk R.F."/>
            <person name="Karlin-Newmann G."/>
            <person name="Liu S.X."/>
            <person name="Lam B."/>
            <person name="Sakano H."/>
            <person name="Wu T."/>
            <person name="Yu G."/>
            <person name="Miranda M."/>
            <person name="Quach H.L."/>
            <person name="Tripp M."/>
            <person name="Chang C.H."/>
            <person name="Lee J.M."/>
            <person name="Toriumi M.J."/>
            <person name="Chan M.M."/>
            <person name="Tang C.C."/>
            <person name="Onodera C.S."/>
            <person name="Deng J.M."/>
            <person name="Akiyama K."/>
            <person name="Ansari Y."/>
            <person name="Arakawa T."/>
            <person name="Banh J."/>
            <person name="Banno F."/>
            <person name="Bowser L."/>
            <person name="Brooks S.Y."/>
            <person name="Carninci P."/>
            <person name="Chao Q."/>
            <person name="Choy N."/>
            <person name="Enju A."/>
            <person name="Goldsmith A.D."/>
            <person name="Gurjal M."/>
            <person name="Hansen N.F."/>
            <person name="Hayashizaki Y."/>
            <person name="Johnson-Hopson C."/>
            <person name="Hsuan V.W."/>
            <person name="Iida K."/>
            <person name="Karnes M."/>
            <person name="Khan S."/>
            <person name="Koesema E."/>
            <person name="Ishida J."/>
            <person name="Jiang P.X."/>
            <person name="Jones T."/>
            <person name="Kawai J."/>
            <person name="Kamiya A."/>
            <person name="Meyers C."/>
            <person name="Nakajima M."/>
            <person name="Narusaka M."/>
            <person name="Seki M."/>
            <person name="Sakurai T."/>
            <person name="Satou M."/>
            <person name="Tamse R."/>
            <person name="Vaysberg M."/>
            <person name="Wallender E.K."/>
            <person name="Wong C."/>
            <person name="Yamamura Y."/>
            <person name="Yuan S."/>
            <person name="Shinozaki K."/>
            <person name="Davis R.W."/>
            <person name="Theologis A."/>
            <person name="Ecker J.R."/>
        </authorList>
    </citation>
    <scope>NUCLEOTIDE SEQUENCE [LARGE SCALE MRNA]</scope>
    <source>
        <strain>cv. Columbia</strain>
    </source>
</reference>
<reference key="5">
    <citation type="submission" date="2006-07" db="EMBL/GenBank/DDBJ databases">
        <title>Large-scale analysis of RIKEN Arabidopsis full-length (RAFL) cDNAs.</title>
        <authorList>
            <person name="Totoki Y."/>
            <person name="Seki M."/>
            <person name="Ishida J."/>
            <person name="Nakajima M."/>
            <person name="Enju A."/>
            <person name="Kamiya A."/>
            <person name="Narusaka M."/>
            <person name="Shin-i T."/>
            <person name="Nakagawa M."/>
            <person name="Sakamoto N."/>
            <person name="Oishi K."/>
            <person name="Kohara Y."/>
            <person name="Kobayashi M."/>
            <person name="Toyoda A."/>
            <person name="Sakaki Y."/>
            <person name="Sakurai T."/>
            <person name="Iida K."/>
            <person name="Akiyama K."/>
            <person name="Satou M."/>
            <person name="Toyoda T."/>
            <person name="Konagaya A."/>
            <person name="Carninci P."/>
            <person name="Kawai J."/>
            <person name="Hayashizaki Y."/>
            <person name="Shinozaki K."/>
        </authorList>
    </citation>
    <scope>NUCLEOTIDE SEQUENCE [LARGE SCALE MRNA]</scope>
    <source>
        <strain>cv. Columbia</strain>
    </source>
</reference>
<reference key="6">
    <citation type="journal article" date="2012" name="BMC Plant Biol.">
        <title>The SLEEPER genes: a transposase-derived angiosperm-specific gene family.</title>
        <authorList>
            <person name="Knip M."/>
            <person name="de Pater S."/>
            <person name="Hooykaas P.J."/>
        </authorList>
    </citation>
    <scope>FUNCTION</scope>
    <scope>SUBUNIT</scope>
    <scope>SUBCELLULAR LOCATION</scope>
    <scope>DISRUPTION PHENOTYPE</scope>
</reference>
<name>DSLE_ARATH</name>